<reference key="1">
    <citation type="journal article" date="2006" name="Science">
        <title>Large-scale sequence analysis of avian influenza isolates.</title>
        <authorList>
            <person name="Obenauer J.C."/>
            <person name="Denson J."/>
            <person name="Mehta P.K."/>
            <person name="Su X."/>
            <person name="Mukatira S."/>
            <person name="Finkelstein D.B."/>
            <person name="Xu X."/>
            <person name="Wang J."/>
            <person name="Ma J."/>
            <person name="Fan Y."/>
            <person name="Rakestraw K.M."/>
            <person name="Webster R.G."/>
            <person name="Hoffmann E."/>
            <person name="Krauss S."/>
            <person name="Zheng J."/>
            <person name="Zhang Z."/>
            <person name="Naeve C.W."/>
        </authorList>
    </citation>
    <scope>NUCLEOTIDE SEQUENCE [GENOMIC RNA]</scope>
</reference>
<gene>
    <name type="primary">PB2</name>
</gene>
<dbReference type="EMBL" id="CY014678">
    <property type="status" value="NOT_ANNOTATED_CDS"/>
    <property type="molecule type" value="Genomic_RNA"/>
</dbReference>
<dbReference type="SMR" id="P0DOG4"/>
<dbReference type="Proteomes" id="UP000008217">
    <property type="component" value="Genome"/>
</dbReference>
<dbReference type="GO" id="GO:0044164">
    <property type="term" value="C:host cell cytosol"/>
    <property type="evidence" value="ECO:0007669"/>
    <property type="project" value="UniProtKB-SubCell"/>
</dbReference>
<dbReference type="GO" id="GO:0033650">
    <property type="term" value="C:host cell mitochondrion"/>
    <property type="evidence" value="ECO:0007669"/>
    <property type="project" value="UniProtKB-SubCell"/>
</dbReference>
<dbReference type="InterPro" id="IPR049110">
    <property type="entry name" value="Flu_PB2_2nd"/>
</dbReference>
<dbReference type="InterPro" id="IPR048298">
    <property type="entry name" value="Flu_PB2_CAP-bd"/>
</dbReference>
<dbReference type="InterPro" id="IPR049111">
    <property type="entry name" value="Flu_PB2_middle"/>
</dbReference>
<dbReference type="InterPro" id="IPR049106">
    <property type="entry name" value="Flu_PB2_N"/>
</dbReference>
<dbReference type="InterPro" id="IPR049113">
    <property type="entry name" value="PB2_helical"/>
</dbReference>
<dbReference type="Pfam" id="PF20947">
    <property type="entry name" value="Flu_PB2_1st"/>
    <property type="match status" value="1"/>
</dbReference>
<dbReference type="Pfam" id="PF20948">
    <property type="entry name" value="Flu_PB2_2nd"/>
    <property type="match status" value="1"/>
</dbReference>
<dbReference type="Pfam" id="PF20949">
    <property type="entry name" value="Flu_PB2_3rd"/>
    <property type="match status" value="1"/>
</dbReference>
<dbReference type="Pfam" id="PF20950">
    <property type="entry name" value="Flu_PB2_4th"/>
    <property type="match status" value="1"/>
</dbReference>
<dbReference type="Pfam" id="PF00604">
    <property type="entry name" value="Flu_PB2_5th"/>
    <property type="match status" value="1"/>
</dbReference>
<keyword id="KW-0025">Alternative splicing</keyword>
<keyword id="KW-1035">Host cytoplasm</keyword>
<keyword id="KW-1045">Host mitochondrion</keyword>
<organismHost>
    <name type="scientific">Aves</name>
    <dbReference type="NCBI Taxonomy" id="8782"/>
</organismHost>
<comment type="function">
    <text evidence="2">May participate in the inhibition of type I interferon induction through inhibition of the host mitochondrial antiviral signaling protein MAVS. The knockout of PB2-S1 has no detectable effects on laboratory infected mice.</text>
</comment>
<comment type="subcellular location">
    <subcellularLocation>
        <location evidence="2">Host mitochondrion</location>
    </subcellularLocation>
    <subcellularLocation>
        <location evidence="2">Host cytoplasm</location>
        <location evidence="2">Host cytosol</location>
    </subcellularLocation>
</comment>
<comment type="alternative products">
    <event type="alternative splicing"/>
    <isoform>
        <id>P0DOG4-1</id>
        <name evidence="1">PB2-S1</name>
        <sequence type="displayed"/>
    </isoform>
    <isoform>
        <id>Q0A438-1</id>
        <name>Polymerase basic protein 2</name>
        <sequence type="external"/>
    </isoform>
</comment>
<organism>
    <name type="scientific">Influenza A virus (strain A/Duck/Germany/1949 H10N7)</name>
    <dbReference type="NCBI Taxonomy" id="382838"/>
    <lineage>
        <taxon>Viruses</taxon>
        <taxon>Riboviria</taxon>
        <taxon>Orthornavirae</taxon>
        <taxon>Negarnaviricota</taxon>
        <taxon>Polyploviricotina</taxon>
        <taxon>Insthoviricetes</taxon>
        <taxon>Articulavirales</taxon>
        <taxon>Orthomyxoviridae</taxon>
        <taxon>Alphainfluenzavirus</taxon>
        <taxon>Alphainfluenzavirus influenzae</taxon>
        <taxon>Influenza A virus</taxon>
    </lineage>
</organism>
<name>PB2S1_I49A1</name>
<accession>P0DOG4</accession>
<feature type="chain" id="PRO_0000440602" description="PB2-S1">
    <location>
        <begin position="1"/>
        <end position="507"/>
    </location>
</feature>
<proteinExistence type="inferred from homology"/>
<evidence type="ECO:0000250" key="1">
    <source>
        <dbReference type="UniProtKB" id="P03427"/>
    </source>
</evidence>
<evidence type="ECO:0000250" key="2">
    <source>
        <dbReference type="UniProtKB" id="P0DOG3"/>
    </source>
</evidence>
<sequence length="507" mass="57661">MERIKELRDLMSQSRTREILTKTTVDHMAIIKKYTSGRQEKNPALRMKWMMAMKYPITADKRIMEMIPERNEQGQTLWSKTNDAGSDRVMVSPLAVTWWNRNGPTTSTVHYPKVYKPYFEKVERLKHGTFGPVHFRNQVKIRRRVDINPGHADLSAKEAQDVIMEVVFPNEVGARILTSESQLTITKEKKEELQNCKIAPLMVAYMLERELVRKTRFLPVAGGTSSVYIEVLHLTQGTCWEQMYTPGGEVRNDDVDQSLIIAARNIVRRATVSADPLASLLEMCHSTQIGGIRMVDILRQNPTEEQAVDICKAAMGLRISSSFSFGGFTFKRTSGSSVKREEEVLTGNLQTLKIRVHEGYEEFTMVGRRATAILRKATRRLIQLIVSGRDEQSIAEAIIVAMVFSQEDCMIKAVRGDLNFVNRANQRLNPMHQLLRHFQKDAKVLFQNWGIEPIDNVMGMIGILPDMTPSTEMSLRGVRVSKMGVDEYSSTERVQPHRSRVGCSSLL</sequence>
<protein>
    <recommendedName>
        <fullName>PB2-S1</fullName>
    </recommendedName>
</protein>